<accession>Q7T6X8</accession>
<reference key="1">
    <citation type="journal article" date="2004" name="Science">
        <title>The 1.2-megabase genome sequence of Mimivirus.</title>
        <authorList>
            <person name="Raoult D."/>
            <person name="Audic S."/>
            <person name="Robert C."/>
            <person name="Abergel C."/>
            <person name="Renesto P."/>
            <person name="Ogata H."/>
            <person name="La Scola B."/>
            <person name="Susan M."/>
            <person name="Claverie J.-M."/>
        </authorList>
    </citation>
    <scope>NUCLEOTIDE SEQUENCE [LARGE SCALE GENOMIC DNA]</scope>
    <source>
        <strain>Rowbotham-Bradford</strain>
    </source>
</reference>
<name>YR700_MIMIV</name>
<gene>
    <name type="ordered locus">MIMI_R700</name>
</gene>
<sequence length="401" mass="46710">MDYSHKYIKYKKKYLSLRNKLDRENTPVIISRIEDNFSIDDKITQSNNNFTNNVFYNFDTSANIFSPMSLTFSLALLQLAAGSETDKSLTKFLGYKYSLDDINYLFNIMNSSIMKLSNLLVVNNKYSINQEYRSMLNGIAVIVQDDFITNKKLISQKVNEFVESETNAMIKNVINDSDIDNKSVFIMVNTIYFKANWKHKFPVDNTTKMRFHRTQEDVVDMMYQVNSFNYYENKALQLIELPYNDEDYVMGIILPKVYNTDNVDYTINNVPMFSPAEINEFINNCQYSKVELYVPKFTQRKRYEFVPILKKMGLTHLFNKNDTDLNIMAKDAYISRIIHEAVVVIDEIGTEAAATTIVIGQAMATRPVKQKIKVFKADHAFIYYIRHQPTGLFLFFGDYQG</sequence>
<proteinExistence type="inferred from homology"/>
<evidence type="ECO:0000250" key="1"/>
<evidence type="ECO:0000305" key="2"/>
<organism>
    <name type="scientific">Acanthamoeba polyphaga mimivirus</name>
    <name type="common">APMV</name>
    <dbReference type="NCBI Taxonomy" id="212035"/>
    <lineage>
        <taxon>Viruses</taxon>
        <taxon>Varidnaviria</taxon>
        <taxon>Bamfordvirae</taxon>
        <taxon>Nucleocytoviricota</taxon>
        <taxon>Megaviricetes</taxon>
        <taxon>Imitervirales</taxon>
        <taxon>Mimiviridae</taxon>
        <taxon>Megamimivirinae</taxon>
        <taxon>Mimivirus</taxon>
        <taxon>Mimivirus bradfordmassiliense</taxon>
    </lineage>
</organism>
<keyword id="KW-0646">Protease inhibitor</keyword>
<keyword id="KW-1185">Reference proteome</keyword>
<keyword id="KW-0722">Serine protease inhibitor</keyword>
<feature type="chain" id="PRO_0000094159" description="Uncharacterized serpin-like protein R700">
    <location>
        <begin position="1"/>
        <end position="401"/>
    </location>
</feature>
<feature type="site" description="Reactive bond" evidence="1">
    <location>
        <begin position="363"/>
        <end position="364"/>
    </location>
</feature>
<protein>
    <recommendedName>
        <fullName>Uncharacterized serpin-like protein R700</fullName>
    </recommendedName>
</protein>
<organismHost>
    <name type="scientific">Acanthamoeba polyphaga</name>
    <name type="common">Amoeba</name>
    <dbReference type="NCBI Taxonomy" id="5757"/>
</organismHost>
<comment type="function">
    <text evidence="2">May act as an inhibitor for a host chymotrypsin-like protease.</text>
</comment>
<comment type="similarity">
    <text evidence="2">Belongs to the serpin family.</text>
</comment>
<dbReference type="EMBL" id="AY653733">
    <property type="protein sequence ID" value="AAQ09582.2"/>
    <property type="molecule type" value="Genomic_DNA"/>
</dbReference>
<dbReference type="SMR" id="Q7T6X8"/>
<dbReference type="KEGG" id="vg:9925353"/>
<dbReference type="OrthoDB" id="9955at10239"/>
<dbReference type="Proteomes" id="UP000001134">
    <property type="component" value="Genome"/>
</dbReference>
<dbReference type="GO" id="GO:0005615">
    <property type="term" value="C:extracellular space"/>
    <property type="evidence" value="ECO:0007669"/>
    <property type="project" value="InterPro"/>
</dbReference>
<dbReference type="GO" id="GO:0004867">
    <property type="term" value="F:serine-type endopeptidase inhibitor activity"/>
    <property type="evidence" value="ECO:0007669"/>
    <property type="project" value="UniProtKB-KW"/>
</dbReference>
<dbReference type="CDD" id="cd19586">
    <property type="entry name" value="serpin_mimivirus"/>
    <property type="match status" value="1"/>
</dbReference>
<dbReference type="Gene3D" id="2.30.39.10">
    <property type="entry name" value="Alpha-1-antitrypsin, domain 1"/>
    <property type="match status" value="1"/>
</dbReference>
<dbReference type="Gene3D" id="3.30.497.10">
    <property type="entry name" value="Antithrombin, subunit I, domain 2"/>
    <property type="match status" value="1"/>
</dbReference>
<dbReference type="InterPro" id="IPR023796">
    <property type="entry name" value="Serpin_dom"/>
</dbReference>
<dbReference type="InterPro" id="IPR000215">
    <property type="entry name" value="Serpin_fam"/>
</dbReference>
<dbReference type="InterPro" id="IPR036186">
    <property type="entry name" value="Serpin_sf"/>
</dbReference>
<dbReference type="InterPro" id="IPR042178">
    <property type="entry name" value="Serpin_sf_1"/>
</dbReference>
<dbReference type="InterPro" id="IPR042185">
    <property type="entry name" value="Serpin_sf_2"/>
</dbReference>
<dbReference type="PANTHER" id="PTHR11461:SF211">
    <property type="entry name" value="GH10112P-RELATED"/>
    <property type="match status" value="1"/>
</dbReference>
<dbReference type="PANTHER" id="PTHR11461">
    <property type="entry name" value="SERINE PROTEASE INHIBITOR, SERPIN"/>
    <property type="match status" value="1"/>
</dbReference>
<dbReference type="Pfam" id="PF00079">
    <property type="entry name" value="Serpin"/>
    <property type="match status" value="1"/>
</dbReference>
<dbReference type="SMART" id="SM00093">
    <property type="entry name" value="SERPIN"/>
    <property type="match status" value="1"/>
</dbReference>
<dbReference type="SUPFAM" id="SSF56574">
    <property type="entry name" value="Serpins"/>
    <property type="match status" value="1"/>
</dbReference>